<keyword id="KW-0067">ATP-binding</keyword>
<keyword id="KW-0547">Nucleotide-binding</keyword>
<keyword id="KW-0548">Nucleotidyltransferase</keyword>
<keyword id="KW-1185">Reference proteome</keyword>
<keyword id="KW-0808">Transferase</keyword>
<protein>
    <recommendedName>
        <fullName evidence="1">Sulfate adenylyltransferase subunit 2</fullName>
        <ecNumber evidence="1">2.7.7.4</ecNumber>
    </recommendedName>
    <alternativeName>
        <fullName evidence="1">ATP-sulfurylase small subunit</fullName>
    </alternativeName>
    <alternativeName>
        <fullName evidence="1">Sulfate adenylate transferase</fullName>
        <shortName evidence="1">SAT</shortName>
    </alternativeName>
</protein>
<comment type="function">
    <text evidence="1">With CysN forms the ATP sulfurylase (ATPS) that catalyzes the adenylation of sulfate producing adenosine 5'-phosphosulfate (APS) and diphosphate, the first enzymatic step in sulfur assimilation pathway. APS synthesis involves the formation of a high-energy phosphoric-sulfuric acid anhydride bond driven by GTP hydrolysis by CysN coupled to ATP hydrolysis by CysD.</text>
</comment>
<comment type="catalytic activity">
    <reaction evidence="1">
        <text>sulfate + ATP + H(+) = adenosine 5'-phosphosulfate + diphosphate</text>
        <dbReference type="Rhea" id="RHEA:18133"/>
        <dbReference type="ChEBI" id="CHEBI:15378"/>
        <dbReference type="ChEBI" id="CHEBI:16189"/>
        <dbReference type="ChEBI" id="CHEBI:30616"/>
        <dbReference type="ChEBI" id="CHEBI:33019"/>
        <dbReference type="ChEBI" id="CHEBI:58243"/>
        <dbReference type="EC" id="2.7.7.4"/>
    </reaction>
</comment>
<comment type="pathway">
    <text evidence="1">Sulfur metabolism; hydrogen sulfide biosynthesis; sulfite from sulfate: step 1/3.</text>
</comment>
<comment type="subunit">
    <text evidence="1">Heterodimer composed of CysD, the smaller subunit, and CysN.</text>
</comment>
<comment type="similarity">
    <text evidence="1">Belongs to the PAPS reductase family. CysD subfamily.</text>
</comment>
<gene>
    <name evidence="1" type="primary">cysD</name>
    <name type="ordered locus">BBta_0328</name>
</gene>
<reference key="1">
    <citation type="journal article" date="2007" name="Science">
        <title>Legumes symbioses: absence of nod genes in photosynthetic bradyrhizobia.</title>
        <authorList>
            <person name="Giraud E."/>
            <person name="Moulin L."/>
            <person name="Vallenet D."/>
            <person name="Barbe V."/>
            <person name="Cytryn E."/>
            <person name="Avarre J.-C."/>
            <person name="Jaubert M."/>
            <person name="Simon D."/>
            <person name="Cartieaux F."/>
            <person name="Prin Y."/>
            <person name="Bena G."/>
            <person name="Hannibal L."/>
            <person name="Fardoux J."/>
            <person name="Kojadinovic M."/>
            <person name="Vuillet L."/>
            <person name="Lajus A."/>
            <person name="Cruveiller S."/>
            <person name="Rouy Z."/>
            <person name="Mangenot S."/>
            <person name="Segurens B."/>
            <person name="Dossat C."/>
            <person name="Franck W.L."/>
            <person name="Chang W.-S."/>
            <person name="Saunders E."/>
            <person name="Bruce D."/>
            <person name="Richardson P."/>
            <person name="Normand P."/>
            <person name="Dreyfus B."/>
            <person name="Pignol D."/>
            <person name="Stacey G."/>
            <person name="Emerich D."/>
            <person name="Vermeglio A."/>
            <person name="Medigue C."/>
            <person name="Sadowsky M."/>
        </authorList>
    </citation>
    <scope>NUCLEOTIDE SEQUENCE [LARGE SCALE GENOMIC DNA]</scope>
    <source>
        <strain>BTAi1 / ATCC BAA-1182</strain>
    </source>
</reference>
<dbReference type="EC" id="2.7.7.4" evidence="1"/>
<dbReference type="EMBL" id="CP000494">
    <property type="protein sequence ID" value="ABQ32620.1"/>
    <property type="molecule type" value="Genomic_DNA"/>
</dbReference>
<dbReference type="RefSeq" id="WP_012040674.1">
    <property type="nucleotide sequence ID" value="NC_009485.1"/>
</dbReference>
<dbReference type="SMR" id="A5E8X6"/>
<dbReference type="STRING" id="288000.BBta_0328"/>
<dbReference type="KEGG" id="bbt:BBta_0328"/>
<dbReference type="eggNOG" id="COG0175">
    <property type="taxonomic scope" value="Bacteria"/>
</dbReference>
<dbReference type="HOGENOM" id="CLU_043026_0_0_5"/>
<dbReference type="OrthoDB" id="9772604at2"/>
<dbReference type="UniPathway" id="UPA00140">
    <property type="reaction ID" value="UER00204"/>
</dbReference>
<dbReference type="Proteomes" id="UP000000246">
    <property type="component" value="Chromosome"/>
</dbReference>
<dbReference type="GO" id="GO:0005524">
    <property type="term" value="F:ATP binding"/>
    <property type="evidence" value="ECO:0007669"/>
    <property type="project" value="UniProtKB-KW"/>
</dbReference>
<dbReference type="GO" id="GO:0004781">
    <property type="term" value="F:sulfate adenylyltransferase (ATP) activity"/>
    <property type="evidence" value="ECO:0007669"/>
    <property type="project" value="UniProtKB-UniRule"/>
</dbReference>
<dbReference type="GO" id="GO:0070814">
    <property type="term" value="P:hydrogen sulfide biosynthetic process"/>
    <property type="evidence" value="ECO:0007669"/>
    <property type="project" value="UniProtKB-UniRule"/>
</dbReference>
<dbReference type="GO" id="GO:0000103">
    <property type="term" value="P:sulfate assimilation"/>
    <property type="evidence" value="ECO:0007669"/>
    <property type="project" value="UniProtKB-UniRule"/>
</dbReference>
<dbReference type="CDD" id="cd23946">
    <property type="entry name" value="Sulfate_adenylyltransferase_2"/>
    <property type="match status" value="1"/>
</dbReference>
<dbReference type="FunFam" id="3.40.50.620:FF:000002">
    <property type="entry name" value="Sulfate adenylyltransferase subunit 2"/>
    <property type="match status" value="1"/>
</dbReference>
<dbReference type="Gene3D" id="3.40.50.620">
    <property type="entry name" value="HUPs"/>
    <property type="match status" value="1"/>
</dbReference>
<dbReference type="HAMAP" id="MF_00064">
    <property type="entry name" value="Sulf_adenylyltr_sub2"/>
    <property type="match status" value="1"/>
</dbReference>
<dbReference type="InterPro" id="IPR002500">
    <property type="entry name" value="PAPS_reduct_dom"/>
</dbReference>
<dbReference type="InterPro" id="IPR014729">
    <property type="entry name" value="Rossmann-like_a/b/a_fold"/>
</dbReference>
<dbReference type="InterPro" id="IPR011784">
    <property type="entry name" value="SO4_adenylTrfase_ssu"/>
</dbReference>
<dbReference type="InterPro" id="IPR050128">
    <property type="entry name" value="Sulfate_adenylyltrnsfr_sub2"/>
</dbReference>
<dbReference type="NCBIfam" id="TIGR02039">
    <property type="entry name" value="CysD"/>
    <property type="match status" value="1"/>
</dbReference>
<dbReference type="NCBIfam" id="NF003587">
    <property type="entry name" value="PRK05253.1"/>
    <property type="match status" value="1"/>
</dbReference>
<dbReference type="NCBIfam" id="NF009214">
    <property type="entry name" value="PRK12563.1"/>
    <property type="match status" value="1"/>
</dbReference>
<dbReference type="PANTHER" id="PTHR43196">
    <property type="entry name" value="SULFATE ADENYLYLTRANSFERASE SUBUNIT 2"/>
    <property type="match status" value="1"/>
</dbReference>
<dbReference type="PANTHER" id="PTHR43196:SF1">
    <property type="entry name" value="SULFATE ADENYLYLTRANSFERASE SUBUNIT 2"/>
    <property type="match status" value="1"/>
</dbReference>
<dbReference type="Pfam" id="PF01507">
    <property type="entry name" value="PAPS_reduct"/>
    <property type="match status" value="1"/>
</dbReference>
<dbReference type="PIRSF" id="PIRSF002936">
    <property type="entry name" value="CysDAde_trans"/>
    <property type="match status" value="1"/>
</dbReference>
<dbReference type="SUPFAM" id="SSF52402">
    <property type="entry name" value="Adenine nucleotide alpha hydrolases-like"/>
    <property type="match status" value="1"/>
</dbReference>
<proteinExistence type="inferred from homology"/>
<feature type="chain" id="PRO_0000340180" description="Sulfate adenylyltransferase subunit 2">
    <location>
        <begin position="1"/>
        <end position="322"/>
    </location>
</feature>
<name>CYSD_BRASB</name>
<evidence type="ECO:0000255" key="1">
    <source>
        <dbReference type="HAMAP-Rule" id="MF_00064"/>
    </source>
</evidence>
<sequence>MSSLRHATEIATTRWPAAAEPRPAALNHLHQLEAESIAILREVAAEFRKPVMLYSIGKDSSVLLHLAMKAFHPAKPPFPLLHIDTTWKFRDMIAFRDQRARELGLELLVHVNPEGLAQKISPFTHGSALYTDVMKTQALRQALDAHGFDAAIGGARRDEEKSRAKERIFSHRSATHRWDPKNQRPELWHLYNTMLAPGESMRVFPLSNWTELDVWDYIQLERIPIVPLYFAARRPVVERDGALIMVDDERMPLRPGETPQWRSIRFRTLGCYPLTGATPSTASDLAAIIREMRTSRTSERQGRVIDRDSAASMERKKVEGYF</sequence>
<organism>
    <name type="scientific">Bradyrhizobium sp. (strain BTAi1 / ATCC BAA-1182)</name>
    <dbReference type="NCBI Taxonomy" id="288000"/>
    <lineage>
        <taxon>Bacteria</taxon>
        <taxon>Pseudomonadati</taxon>
        <taxon>Pseudomonadota</taxon>
        <taxon>Alphaproteobacteria</taxon>
        <taxon>Hyphomicrobiales</taxon>
        <taxon>Nitrobacteraceae</taxon>
        <taxon>Bradyrhizobium</taxon>
    </lineage>
</organism>
<accession>A5E8X6</accession>